<sequence>MASKIIAGKPDDTEYEIIEGESESALAAGTSPWMNSSTLKLRHRIGRGPFGDVWLATHHQSTEDYDEHHEVAIKMLYPIKEDQRRVVVDKFEDLFSKCQGLENVCLLRGVSSINGKICVVMKFYEGSLGDKMARLKGGKLSLPDVLRYGVDLATGILELHSKGFLILNLKPSNFLLSDNDKAILGDVGIPYLLLSIPLPSSDMTERLGTPNYMAPEQWQPDVRGPMSFETDSWGFGCSIVEMLTGVQPWSGRSADEIYDLVVRKQEKLSIPSSIPPPLENLLRGCFMYDLRSRPSMTDILLVLKSLQNSEEEQVRRGIDSREIRKSSATLGYTEWFLSKDHLQVRDTVRSRKPANSCKHENMDVPEGMVVGLERDSTDPDGFVLVKVHGVHDPLRVHVSVLERVTNGLASGDWVRLKVRKDKRHSPVGVLHSIDREGNVAVGFIGLPTLWKGTSSQLQMAKVYSVGQFVKLKANVVIPRFKWMRKGRGIWATGRISQVLPNGCLEVDFPGMLPFGEEHGSYLADPAEVEIVNFNTCQGAVEKYQHLEDFHWAVRPLLIAMGLLTAMKLGICVRKKIGRSKDGKQRDGSTGQGDCKIPDGKGSDKSKWLVFF</sequence>
<proteinExistence type="evidence at protein level"/>
<evidence type="ECO:0000255" key="1"/>
<evidence type="ECO:0000255" key="2">
    <source>
        <dbReference type="PROSITE-ProRule" id="PRU00159"/>
    </source>
</evidence>
<evidence type="ECO:0000256" key="3">
    <source>
        <dbReference type="SAM" id="MobiDB-lite"/>
    </source>
</evidence>
<evidence type="ECO:0000269" key="4">
    <source>
    </source>
</evidence>
<evidence type="ECO:0000303" key="5">
    <source>
    </source>
</evidence>
<evidence type="ECO:0000305" key="6"/>
<evidence type="ECO:0000305" key="7">
    <source>
    </source>
</evidence>
<evidence type="ECO:0000312" key="8">
    <source>
        <dbReference type="Araport" id="AT4G32250"/>
    </source>
</evidence>
<evidence type="ECO:0000312" key="9">
    <source>
        <dbReference type="EMBL" id="CAA16965.1"/>
    </source>
</evidence>
<accession>Q8RWX4</accession>
<accession>O49365</accession>
<feature type="chain" id="PRO_0000458744" description="Protein KINASE OF THE OUTER CHLOROPLAST MEMBRANE 1">
    <location>
        <begin position="1"/>
        <end position="611"/>
    </location>
</feature>
<feature type="topological domain" description="Cytoplasmic" evidence="7">
    <location>
        <begin position="1"/>
        <end position="555"/>
    </location>
</feature>
<feature type="transmembrane region" description="Helical" evidence="1">
    <location>
        <begin position="556"/>
        <end position="572"/>
    </location>
</feature>
<feature type="topological domain" description="Chloroplast intermembrane" evidence="7">
    <location>
        <begin position="573"/>
        <end position="611"/>
    </location>
</feature>
<feature type="domain" description="Protein kinase" evidence="2">
    <location>
        <begin position="39"/>
        <end position="306"/>
    </location>
</feature>
<feature type="region of interest" description="Disordered" evidence="3">
    <location>
        <begin position="579"/>
        <end position="606"/>
    </location>
</feature>
<feature type="compositionally biased region" description="Basic and acidic residues" evidence="3">
    <location>
        <begin position="595"/>
        <end position="606"/>
    </location>
</feature>
<feature type="binding site" evidence="2">
    <location>
        <begin position="45"/>
        <end position="53"/>
    </location>
    <ligand>
        <name>ATP</name>
        <dbReference type="ChEBI" id="CHEBI:30616"/>
    </ligand>
</feature>
<feature type="binding site" evidence="2">
    <location>
        <position position="74"/>
    </location>
    <ligand>
        <name>ATP</name>
        <dbReference type="ChEBI" id="CHEBI:30616"/>
    </ligand>
</feature>
<comment type="function">
    <text evidence="4">Serine/threonine protein kinase acting as a regulatory component of the plastid protein import machinery by phosphorylating import receptors (e.g. the A-domain of TOC159, TOC120 and TOC132) (PubMed:28283569). Supports preprotein import and contributes to efficient chloroplast biogenesis, thus being required for survival during de-etiolation (PubMed:28283569).</text>
</comment>
<comment type="catalytic activity">
    <reaction evidence="4">
        <text>L-seryl-[protein] + ATP = O-phospho-L-seryl-[protein] + ADP + H(+)</text>
        <dbReference type="Rhea" id="RHEA:17989"/>
        <dbReference type="Rhea" id="RHEA-COMP:9863"/>
        <dbReference type="Rhea" id="RHEA-COMP:11604"/>
        <dbReference type="ChEBI" id="CHEBI:15378"/>
        <dbReference type="ChEBI" id="CHEBI:29999"/>
        <dbReference type="ChEBI" id="CHEBI:30616"/>
        <dbReference type="ChEBI" id="CHEBI:83421"/>
        <dbReference type="ChEBI" id="CHEBI:456216"/>
        <dbReference type="EC" id="2.7.11.1"/>
    </reaction>
</comment>
<comment type="catalytic activity">
    <reaction evidence="4">
        <text>L-threonyl-[protein] + ATP = O-phospho-L-threonyl-[protein] + ADP + H(+)</text>
        <dbReference type="Rhea" id="RHEA:46608"/>
        <dbReference type="Rhea" id="RHEA-COMP:11060"/>
        <dbReference type="Rhea" id="RHEA-COMP:11605"/>
        <dbReference type="ChEBI" id="CHEBI:15378"/>
        <dbReference type="ChEBI" id="CHEBI:30013"/>
        <dbReference type="ChEBI" id="CHEBI:30616"/>
        <dbReference type="ChEBI" id="CHEBI:61977"/>
        <dbReference type="ChEBI" id="CHEBI:456216"/>
        <dbReference type="EC" id="2.7.11.1"/>
    </reaction>
</comment>
<comment type="subunit">
    <text evidence="4">Associates with the TOC complex containing, at least, translocons at the chloroplast envelope (e.g. TOCs and TICs such as TOC159, TOC75, TOC33 and TIC56).</text>
</comment>
<comment type="subcellular location">
    <subcellularLocation>
        <location evidence="4">Plastid</location>
        <location evidence="4">Chloroplast outer membrane</location>
        <topology evidence="4">Single-pass membrane protein</topology>
        <orientation evidence="4">Cytoplasmic side</orientation>
    </subcellularLocation>
</comment>
<comment type="disruption phenotype">
    <text evidence="4">No visible phenotype under standard growth conditions (PubMed:28283569). Impaired preprotein import efficiency (PubMed:28283569). Reduced seedlings survival rates after transfer from the dark to the light, a process involving massive protein import during chloroplast biogenesis (PubMed:28283569).</text>
</comment>
<comment type="similarity">
    <text evidence="2">Belongs to the protein kinase superfamily. Ser/Thr protein kinase family.</text>
</comment>
<comment type="sequence caution" evidence="6">
    <conflict type="erroneous gene model prediction">
        <sequence resource="EMBL-CDS" id="CAA16965"/>
    </conflict>
</comment>
<comment type="sequence caution" evidence="6">
    <conflict type="erroneous gene model prediction">
        <sequence resource="EMBL-CDS" id="CAB79943"/>
    </conflict>
</comment>
<dbReference type="EC" id="2.7.11.1" evidence="4"/>
<dbReference type="EMBL" id="AL021811">
    <property type="protein sequence ID" value="CAA16965.1"/>
    <property type="status" value="ALT_SEQ"/>
    <property type="molecule type" value="Genomic_DNA"/>
</dbReference>
<dbReference type="EMBL" id="AL161580">
    <property type="protein sequence ID" value="CAB79943.1"/>
    <property type="status" value="ALT_SEQ"/>
    <property type="molecule type" value="Genomic_DNA"/>
</dbReference>
<dbReference type="EMBL" id="CP002687">
    <property type="protein sequence ID" value="AEE86024.1"/>
    <property type="molecule type" value="Genomic_DNA"/>
</dbReference>
<dbReference type="EMBL" id="CP002687">
    <property type="protein sequence ID" value="AEE86025.1"/>
    <property type="molecule type" value="Genomic_DNA"/>
</dbReference>
<dbReference type="EMBL" id="CP002687">
    <property type="protein sequence ID" value="AEE86026.1"/>
    <property type="molecule type" value="Genomic_DNA"/>
</dbReference>
<dbReference type="EMBL" id="AY091045">
    <property type="protein sequence ID" value="AAM13866.1"/>
    <property type="molecule type" value="mRNA"/>
</dbReference>
<dbReference type="EMBL" id="AY117352">
    <property type="protein sequence ID" value="AAM51427.1"/>
    <property type="molecule type" value="mRNA"/>
</dbReference>
<dbReference type="EMBL" id="AY123999">
    <property type="protein sequence ID" value="AAM74508.1"/>
    <property type="molecule type" value="mRNA"/>
</dbReference>
<dbReference type="EMBL" id="BT001064">
    <property type="protein sequence ID" value="AAN46821.1"/>
    <property type="molecule type" value="mRNA"/>
</dbReference>
<dbReference type="PIR" id="T05403">
    <property type="entry name" value="T05403"/>
</dbReference>
<dbReference type="RefSeq" id="NP_001031769.1">
    <property type="nucleotide sequence ID" value="NM_001036692.1"/>
</dbReference>
<dbReference type="RefSeq" id="NP_194952.2">
    <property type="nucleotide sequence ID" value="NM_119377.5"/>
</dbReference>
<dbReference type="RefSeq" id="NP_849560.1">
    <property type="nucleotide sequence ID" value="NM_179229.2"/>
</dbReference>
<dbReference type="SMR" id="Q8RWX4"/>
<dbReference type="FunCoup" id="Q8RWX4">
    <property type="interactions" value="1253"/>
</dbReference>
<dbReference type="IntAct" id="Q8RWX4">
    <property type="interactions" value="2"/>
</dbReference>
<dbReference type="STRING" id="3702.Q8RWX4"/>
<dbReference type="iPTMnet" id="Q8RWX4"/>
<dbReference type="PaxDb" id="3702-AT4G32250.2"/>
<dbReference type="ProteomicsDB" id="175314"/>
<dbReference type="EnsemblPlants" id="AT4G32250.1">
    <property type="protein sequence ID" value="AT4G32250.1"/>
    <property type="gene ID" value="AT4G32250"/>
</dbReference>
<dbReference type="EnsemblPlants" id="AT4G32250.2">
    <property type="protein sequence ID" value="AT4G32250.2"/>
    <property type="gene ID" value="AT4G32250"/>
</dbReference>
<dbReference type="EnsemblPlants" id="AT4G32250.3">
    <property type="protein sequence ID" value="AT4G32250.3"/>
    <property type="gene ID" value="AT4G32250"/>
</dbReference>
<dbReference type="GeneID" id="829358"/>
<dbReference type="Gramene" id="AT4G32250.1">
    <property type="protein sequence ID" value="AT4G32250.1"/>
    <property type="gene ID" value="AT4G32250"/>
</dbReference>
<dbReference type="Gramene" id="AT4G32250.2">
    <property type="protein sequence ID" value="AT4G32250.2"/>
    <property type="gene ID" value="AT4G32250"/>
</dbReference>
<dbReference type="Gramene" id="AT4G32250.3">
    <property type="protein sequence ID" value="AT4G32250.3"/>
    <property type="gene ID" value="AT4G32250"/>
</dbReference>
<dbReference type="KEGG" id="ath:AT4G32250"/>
<dbReference type="Araport" id="AT4G32250"/>
<dbReference type="TAIR" id="AT4G32250">
    <property type="gene designation" value="KOC1"/>
</dbReference>
<dbReference type="eggNOG" id="KOG0198">
    <property type="taxonomic scope" value="Eukaryota"/>
</dbReference>
<dbReference type="HOGENOM" id="CLU_029974_0_0_1"/>
<dbReference type="OMA" id="FQMAESY"/>
<dbReference type="PRO" id="PR:Q8RWX4"/>
<dbReference type="Proteomes" id="UP000006548">
    <property type="component" value="Chromosome 4"/>
</dbReference>
<dbReference type="ExpressionAtlas" id="Q8RWX4">
    <property type="expression patterns" value="baseline and differential"/>
</dbReference>
<dbReference type="GO" id="GO:0009507">
    <property type="term" value="C:chloroplast"/>
    <property type="evidence" value="ECO:0007005"/>
    <property type="project" value="TAIR"/>
</dbReference>
<dbReference type="GO" id="GO:0009941">
    <property type="term" value="C:chloroplast envelope"/>
    <property type="evidence" value="ECO:0000314"/>
    <property type="project" value="TAIR"/>
</dbReference>
<dbReference type="GO" id="GO:0009707">
    <property type="term" value="C:chloroplast outer membrane"/>
    <property type="evidence" value="ECO:0000314"/>
    <property type="project" value="UniProtKB"/>
</dbReference>
<dbReference type="GO" id="GO:0005886">
    <property type="term" value="C:plasma membrane"/>
    <property type="evidence" value="ECO:0007005"/>
    <property type="project" value="TAIR"/>
</dbReference>
<dbReference type="GO" id="GO:0009536">
    <property type="term" value="C:plastid"/>
    <property type="evidence" value="ECO:0007005"/>
    <property type="project" value="TAIR"/>
</dbReference>
<dbReference type="GO" id="GO:0010006">
    <property type="term" value="C:Toc complex"/>
    <property type="evidence" value="ECO:0000314"/>
    <property type="project" value="TAIR"/>
</dbReference>
<dbReference type="GO" id="GO:0005524">
    <property type="term" value="F:ATP binding"/>
    <property type="evidence" value="ECO:0007669"/>
    <property type="project" value="UniProtKB-KW"/>
</dbReference>
<dbReference type="GO" id="GO:0004672">
    <property type="term" value="F:protein kinase activity"/>
    <property type="evidence" value="ECO:0000314"/>
    <property type="project" value="TAIR"/>
</dbReference>
<dbReference type="GO" id="GO:0004674">
    <property type="term" value="F:protein serine/threonine kinase activity"/>
    <property type="evidence" value="ECO:0000314"/>
    <property type="project" value="UniProtKB"/>
</dbReference>
<dbReference type="GO" id="GO:0009704">
    <property type="term" value="P:de-etiolation"/>
    <property type="evidence" value="ECO:0000315"/>
    <property type="project" value="TAIR"/>
</dbReference>
<dbReference type="GO" id="GO:1904216">
    <property type="term" value="P:positive regulation of protein import into chloroplast stroma"/>
    <property type="evidence" value="ECO:0000315"/>
    <property type="project" value="TAIR"/>
</dbReference>
<dbReference type="GO" id="GO:0045036">
    <property type="term" value="P:protein targeting to chloroplast"/>
    <property type="evidence" value="ECO:0000315"/>
    <property type="project" value="UniProtKB"/>
</dbReference>
<dbReference type="CDD" id="cd14014">
    <property type="entry name" value="STKc_PknB_like"/>
    <property type="match status" value="1"/>
</dbReference>
<dbReference type="FunFam" id="3.30.200.20:FF:001173">
    <property type="entry name" value="Kinase family protein"/>
    <property type="match status" value="1"/>
</dbReference>
<dbReference type="Gene3D" id="3.30.200.20">
    <property type="entry name" value="Phosphorylase Kinase, domain 1"/>
    <property type="match status" value="1"/>
</dbReference>
<dbReference type="Gene3D" id="1.10.510.10">
    <property type="entry name" value="Transferase(Phosphotransferase) domain 1"/>
    <property type="match status" value="1"/>
</dbReference>
<dbReference type="InterPro" id="IPR011009">
    <property type="entry name" value="Kinase-like_dom_sf"/>
</dbReference>
<dbReference type="InterPro" id="IPR053293">
    <property type="entry name" value="OCM_Kinase"/>
</dbReference>
<dbReference type="InterPro" id="IPR000719">
    <property type="entry name" value="Prot_kinase_dom"/>
</dbReference>
<dbReference type="InterPro" id="IPR001245">
    <property type="entry name" value="Ser-Thr/Tyr_kinase_cat_dom"/>
</dbReference>
<dbReference type="PANTHER" id="PTHR47209">
    <property type="entry name" value="OS06G0639500 PROTEIN"/>
    <property type="match status" value="1"/>
</dbReference>
<dbReference type="PANTHER" id="PTHR47209:SF1">
    <property type="entry name" value="OS06G0639500 PROTEIN"/>
    <property type="match status" value="1"/>
</dbReference>
<dbReference type="Pfam" id="PF07714">
    <property type="entry name" value="PK_Tyr_Ser-Thr"/>
    <property type="match status" value="1"/>
</dbReference>
<dbReference type="SUPFAM" id="SSF56112">
    <property type="entry name" value="Protein kinase-like (PK-like)"/>
    <property type="match status" value="1"/>
</dbReference>
<dbReference type="PROSITE" id="PS50011">
    <property type="entry name" value="PROTEIN_KINASE_DOM"/>
    <property type="match status" value="1"/>
</dbReference>
<reference key="1">
    <citation type="journal article" date="1999" name="Nature">
        <title>Sequence and analysis of chromosome 4 of the plant Arabidopsis thaliana.</title>
        <authorList>
            <person name="Mayer K.F.X."/>
            <person name="Schueller C."/>
            <person name="Wambutt R."/>
            <person name="Murphy G."/>
            <person name="Volckaert G."/>
            <person name="Pohl T."/>
            <person name="Duesterhoeft A."/>
            <person name="Stiekema W."/>
            <person name="Entian K.-D."/>
            <person name="Terryn N."/>
            <person name="Harris B."/>
            <person name="Ansorge W."/>
            <person name="Brandt P."/>
            <person name="Grivell L.A."/>
            <person name="Rieger M."/>
            <person name="Weichselgartner M."/>
            <person name="de Simone V."/>
            <person name="Obermaier B."/>
            <person name="Mache R."/>
            <person name="Mueller M."/>
            <person name="Kreis M."/>
            <person name="Delseny M."/>
            <person name="Puigdomenech P."/>
            <person name="Watson M."/>
            <person name="Schmidtheini T."/>
            <person name="Reichert B."/>
            <person name="Portetelle D."/>
            <person name="Perez-Alonso M."/>
            <person name="Boutry M."/>
            <person name="Bancroft I."/>
            <person name="Vos P."/>
            <person name="Hoheisel J."/>
            <person name="Zimmermann W."/>
            <person name="Wedler H."/>
            <person name="Ridley P."/>
            <person name="Langham S.-A."/>
            <person name="McCullagh B."/>
            <person name="Bilham L."/>
            <person name="Robben J."/>
            <person name="van der Schueren J."/>
            <person name="Grymonprez B."/>
            <person name="Chuang Y.-J."/>
            <person name="Vandenbussche F."/>
            <person name="Braeken M."/>
            <person name="Weltjens I."/>
            <person name="Voet M."/>
            <person name="Bastiaens I."/>
            <person name="Aert R."/>
            <person name="Defoor E."/>
            <person name="Weitzenegger T."/>
            <person name="Bothe G."/>
            <person name="Ramsperger U."/>
            <person name="Hilbert H."/>
            <person name="Braun M."/>
            <person name="Holzer E."/>
            <person name="Brandt A."/>
            <person name="Peters S."/>
            <person name="van Staveren M."/>
            <person name="Dirkse W."/>
            <person name="Mooijman P."/>
            <person name="Klein Lankhorst R."/>
            <person name="Rose M."/>
            <person name="Hauf J."/>
            <person name="Koetter P."/>
            <person name="Berneiser S."/>
            <person name="Hempel S."/>
            <person name="Feldpausch M."/>
            <person name="Lamberth S."/>
            <person name="Van den Daele H."/>
            <person name="De Keyser A."/>
            <person name="Buysshaert C."/>
            <person name="Gielen J."/>
            <person name="Villarroel R."/>
            <person name="De Clercq R."/>
            <person name="van Montagu M."/>
            <person name="Rogers J."/>
            <person name="Cronin A."/>
            <person name="Quail M.A."/>
            <person name="Bray-Allen S."/>
            <person name="Clark L."/>
            <person name="Doggett J."/>
            <person name="Hall S."/>
            <person name="Kay M."/>
            <person name="Lennard N."/>
            <person name="McLay K."/>
            <person name="Mayes R."/>
            <person name="Pettett A."/>
            <person name="Rajandream M.A."/>
            <person name="Lyne M."/>
            <person name="Benes V."/>
            <person name="Rechmann S."/>
            <person name="Borkova D."/>
            <person name="Bloecker H."/>
            <person name="Scharfe M."/>
            <person name="Grimm M."/>
            <person name="Loehnert T.-H."/>
            <person name="Dose S."/>
            <person name="de Haan M."/>
            <person name="Maarse A.C."/>
            <person name="Schaefer M."/>
            <person name="Mueller-Auer S."/>
            <person name="Gabel C."/>
            <person name="Fuchs M."/>
            <person name="Fartmann B."/>
            <person name="Granderath K."/>
            <person name="Dauner D."/>
            <person name="Herzl A."/>
            <person name="Neumann S."/>
            <person name="Argiriou A."/>
            <person name="Vitale D."/>
            <person name="Liguori R."/>
            <person name="Piravandi E."/>
            <person name="Massenet O."/>
            <person name="Quigley F."/>
            <person name="Clabauld G."/>
            <person name="Muendlein A."/>
            <person name="Felber R."/>
            <person name="Schnabl S."/>
            <person name="Hiller R."/>
            <person name="Schmidt W."/>
            <person name="Lecharny A."/>
            <person name="Aubourg S."/>
            <person name="Chefdor F."/>
            <person name="Cooke R."/>
            <person name="Berger C."/>
            <person name="Monfort A."/>
            <person name="Casacuberta E."/>
            <person name="Gibbons T."/>
            <person name="Weber N."/>
            <person name="Vandenbol M."/>
            <person name="Bargues M."/>
            <person name="Terol J."/>
            <person name="Torres A."/>
            <person name="Perez-Perez A."/>
            <person name="Purnelle B."/>
            <person name="Bent E."/>
            <person name="Johnson S."/>
            <person name="Tacon D."/>
            <person name="Jesse T."/>
            <person name="Heijnen L."/>
            <person name="Schwarz S."/>
            <person name="Scholler P."/>
            <person name="Heber S."/>
            <person name="Francs P."/>
            <person name="Bielke C."/>
            <person name="Frishman D."/>
            <person name="Haase D."/>
            <person name="Lemcke K."/>
            <person name="Mewes H.-W."/>
            <person name="Stocker S."/>
            <person name="Zaccaria P."/>
            <person name="Bevan M."/>
            <person name="Wilson R.K."/>
            <person name="de la Bastide M."/>
            <person name="Habermann K."/>
            <person name="Parnell L."/>
            <person name="Dedhia N."/>
            <person name="Gnoj L."/>
            <person name="Schutz K."/>
            <person name="Huang E."/>
            <person name="Spiegel L."/>
            <person name="Sekhon M."/>
            <person name="Murray J."/>
            <person name="Sheet P."/>
            <person name="Cordes M."/>
            <person name="Abu-Threideh J."/>
            <person name="Stoneking T."/>
            <person name="Kalicki J."/>
            <person name="Graves T."/>
            <person name="Harmon G."/>
            <person name="Edwards J."/>
            <person name="Latreille P."/>
            <person name="Courtney L."/>
            <person name="Cloud J."/>
            <person name="Abbott A."/>
            <person name="Scott K."/>
            <person name="Johnson D."/>
            <person name="Minx P."/>
            <person name="Bentley D."/>
            <person name="Fulton B."/>
            <person name="Miller N."/>
            <person name="Greco T."/>
            <person name="Kemp K."/>
            <person name="Kramer J."/>
            <person name="Fulton L."/>
            <person name="Mardis E."/>
            <person name="Dante M."/>
            <person name="Pepin K."/>
            <person name="Hillier L.W."/>
            <person name="Nelson J."/>
            <person name="Spieth J."/>
            <person name="Ryan E."/>
            <person name="Andrews S."/>
            <person name="Geisel C."/>
            <person name="Layman D."/>
            <person name="Du H."/>
            <person name="Ali J."/>
            <person name="Berghoff A."/>
            <person name="Jones K."/>
            <person name="Drone K."/>
            <person name="Cotton M."/>
            <person name="Joshu C."/>
            <person name="Antonoiu B."/>
            <person name="Zidanic M."/>
            <person name="Strong C."/>
            <person name="Sun H."/>
            <person name="Lamar B."/>
            <person name="Yordan C."/>
            <person name="Ma P."/>
            <person name="Zhong J."/>
            <person name="Preston R."/>
            <person name="Vil D."/>
            <person name="Shekher M."/>
            <person name="Matero A."/>
            <person name="Shah R."/>
            <person name="Swaby I.K."/>
            <person name="O'Shaughnessy A."/>
            <person name="Rodriguez M."/>
            <person name="Hoffman J."/>
            <person name="Till S."/>
            <person name="Granat S."/>
            <person name="Shohdy N."/>
            <person name="Hasegawa A."/>
            <person name="Hameed A."/>
            <person name="Lodhi M."/>
            <person name="Johnson A."/>
            <person name="Chen E."/>
            <person name="Marra M.A."/>
            <person name="Martienssen R."/>
            <person name="McCombie W.R."/>
        </authorList>
    </citation>
    <scope>NUCLEOTIDE SEQUENCE [LARGE SCALE GENOMIC DNA]</scope>
    <source>
        <strain>cv. Columbia</strain>
    </source>
</reference>
<reference key="2">
    <citation type="journal article" date="2003" name="Science">
        <title>Empirical analysis of transcriptional activity in the Arabidopsis genome.</title>
        <authorList>
            <person name="Yamada K."/>
            <person name="Lim J."/>
            <person name="Dale J.M."/>
            <person name="Chen H."/>
            <person name="Shinn P."/>
            <person name="Palm C.J."/>
            <person name="Southwick A.M."/>
            <person name="Wu H.C."/>
            <person name="Kim C.J."/>
            <person name="Nguyen M."/>
            <person name="Pham P.K."/>
            <person name="Cheuk R.F."/>
            <person name="Karlin-Newmann G."/>
            <person name="Liu S.X."/>
            <person name="Lam B."/>
            <person name="Sakano H."/>
            <person name="Wu T."/>
            <person name="Yu G."/>
            <person name="Miranda M."/>
            <person name="Quach H.L."/>
            <person name="Tripp M."/>
            <person name="Chang C.H."/>
            <person name="Lee J.M."/>
            <person name="Toriumi M.J."/>
            <person name="Chan M.M."/>
            <person name="Tang C.C."/>
            <person name="Onodera C.S."/>
            <person name="Deng J.M."/>
            <person name="Akiyama K."/>
            <person name="Ansari Y."/>
            <person name="Arakawa T."/>
            <person name="Banh J."/>
            <person name="Banno F."/>
            <person name="Bowser L."/>
            <person name="Brooks S.Y."/>
            <person name="Carninci P."/>
            <person name="Chao Q."/>
            <person name="Choy N."/>
            <person name="Enju A."/>
            <person name="Goldsmith A.D."/>
            <person name="Gurjal M."/>
            <person name="Hansen N.F."/>
            <person name="Hayashizaki Y."/>
            <person name="Johnson-Hopson C."/>
            <person name="Hsuan V.W."/>
            <person name="Iida K."/>
            <person name="Karnes M."/>
            <person name="Khan S."/>
            <person name="Koesema E."/>
            <person name="Ishida J."/>
            <person name="Jiang P.X."/>
            <person name="Jones T."/>
            <person name="Kawai J."/>
            <person name="Kamiya A."/>
            <person name="Meyers C."/>
            <person name="Nakajima M."/>
            <person name="Narusaka M."/>
            <person name="Seki M."/>
            <person name="Sakurai T."/>
            <person name="Satou M."/>
            <person name="Tamse R."/>
            <person name="Vaysberg M."/>
            <person name="Wallender E.K."/>
            <person name="Wong C."/>
            <person name="Yamamura Y."/>
            <person name="Yuan S."/>
            <person name="Shinozaki K."/>
            <person name="Davis R.W."/>
            <person name="Theologis A."/>
            <person name="Ecker J.R."/>
        </authorList>
    </citation>
    <scope>NUCLEOTIDE SEQUENCE [LARGE SCALE MRNA]</scope>
    <source>
        <strain>cv. Columbia</strain>
    </source>
</reference>
<reference key="3">
    <citation type="journal article" date="2017" name="Plant J.">
        <title>Araport11: a complete reannotation of the Arabidopsis thaliana reference genome.</title>
        <authorList>
            <person name="Cheng C.Y."/>
            <person name="Krishnakumar V."/>
            <person name="Chan A.P."/>
            <person name="Thibaud-Nissen F."/>
            <person name="Schobel S."/>
            <person name="Town C.D."/>
        </authorList>
    </citation>
    <scope>GENOME REANNOTATION</scope>
    <source>
        <strain>cv. Columbia</strain>
    </source>
</reference>
<reference key="4">
    <citation type="journal article" date="2017" name="J. Biol. Chem.">
        <title>The novel chloroplast outer membrane kinase KOC1 is a required component of the plastid protein import machinery.</title>
        <authorList>
            <person name="Zufferey M."/>
            <person name="Montandon C."/>
            <person name="Douet V."/>
            <person name="Demarsy E."/>
            <person name="Agne B."/>
            <person name="Baginsky S."/>
            <person name="Kessler F."/>
        </authorList>
    </citation>
    <scope>FUNCTION</scope>
    <scope>DISRUPTION PHENOTYPE</scope>
    <scope>CATALYTIC ACTIVITY</scope>
    <scope>SUBCELLULAR LOCATION</scope>
    <scope>SUBUNIT</scope>
    <source>
        <strain>cv. Columbia</strain>
    </source>
</reference>
<keyword id="KW-0067">ATP-binding</keyword>
<keyword id="KW-0150">Chloroplast</keyword>
<keyword id="KW-0418">Kinase</keyword>
<keyword id="KW-0472">Membrane</keyword>
<keyword id="KW-0547">Nucleotide-binding</keyword>
<keyword id="KW-0934">Plastid</keyword>
<keyword id="KW-1002">Plastid outer membrane</keyword>
<keyword id="KW-1185">Reference proteome</keyword>
<keyword id="KW-0723">Serine/threonine-protein kinase</keyword>
<keyword id="KW-0808">Transferase</keyword>
<keyword id="KW-0812">Transmembrane</keyword>
<keyword id="KW-1133">Transmembrane helix</keyword>
<organism>
    <name type="scientific">Arabidopsis thaliana</name>
    <name type="common">Mouse-ear cress</name>
    <dbReference type="NCBI Taxonomy" id="3702"/>
    <lineage>
        <taxon>Eukaryota</taxon>
        <taxon>Viridiplantae</taxon>
        <taxon>Streptophyta</taxon>
        <taxon>Embryophyta</taxon>
        <taxon>Tracheophyta</taxon>
        <taxon>Spermatophyta</taxon>
        <taxon>Magnoliopsida</taxon>
        <taxon>eudicotyledons</taxon>
        <taxon>Gunneridae</taxon>
        <taxon>Pentapetalae</taxon>
        <taxon>rosids</taxon>
        <taxon>malvids</taxon>
        <taxon>Brassicales</taxon>
        <taxon>Brassicaceae</taxon>
        <taxon>Camelineae</taxon>
        <taxon>Arabidopsis</taxon>
    </lineage>
</organism>
<gene>
    <name evidence="5" type="primary">KOC1</name>
    <name evidence="8" type="ordered locus">At4g32250</name>
    <name evidence="9" type="ORF">F10M6.110</name>
</gene>
<protein>
    <recommendedName>
        <fullName evidence="5">Protein KINASE OF THE OUTER CHLOROPLAST MEMBRANE 1</fullName>
        <ecNumber evidence="4">2.7.11.1</ecNumber>
    </recommendedName>
</protein>
<name>KOC1_ARATH</name>